<keyword id="KW-0067">ATP-binding</keyword>
<keyword id="KW-0997">Cell inner membrane</keyword>
<keyword id="KW-1003">Cell membrane</keyword>
<keyword id="KW-0418">Kinase</keyword>
<keyword id="KW-0472">Membrane</keyword>
<keyword id="KW-0547">Nucleotide-binding</keyword>
<keyword id="KW-1185">Reference proteome</keyword>
<keyword id="KW-0808">Transferase</keyword>
<keyword id="KW-0812">Transmembrane</keyword>
<keyword id="KW-1133">Transmembrane helix</keyword>
<keyword id="KW-0831">Ubiquinone biosynthesis</keyword>
<protein>
    <recommendedName>
        <fullName evidence="1">Probable protein kinase UbiB</fullName>
        <ecNumber evidence="1">2.7.-.-</ecNumber>
    </recommendedName>
    <alternativeName>
        <fullName evidence="1">Ubiquinone biosynthesis protein UbiB</fullName>
    </alternativeName>
</protein>
<gene>
    <name evidence="1" type="primary">ubiB</name>
    <name type="ordered locus">Ecok1_38200</name>
    <name type="ORF">APECO1_2620</name>
</gene>
<sequence length="546" mass="63217">MTPGEVRRLYFIIRTFLSYGLDELIPKMRITLPLRLWRYSLFWMPNRHKDKPLGERLRLALQELGPVWIKFGQMLSTRRDLFPPHIADQLALLQDKVAPFDGKLAKQQIEAAMGGLPVEAWFDDFEIKPLASASIAQVHTARLKSNGKEVVIKVIRPDILPVIKADLKLIYRLARWVPRLLPDGRRLRPTEVVREYEKTLIDELNLLRESANAIQLRRNFEDSPMLYIPEVYPDYCSEGMMVMERIYGIPVSDVATLEKNGTNMKLLAERGVQVFFTQVFRDSFFHADMHPGNIFVSYEHPENPKYIGIDCGIVGSLNKEDKRYLAENFIAFFNRDYRKVAELHVDSGWVPPDTNVEEFEFAIRTVCEPIFEKPLAEISFGHVLLNLFNTARRFNMEVQPQLVLLQKTLLYVEGVGRQLYPQLDLWKTAKPFLESWIKDQVGIPALVRAFKEKAPFWVEKMPELPELVYDSLRQGKYLQHSVDKIARELQSNHVRQGQSRYFLGIGATLVLSGTFLLVSRPEWGLMPGWLMAGGLIAWFVGWRKTR</sequence>
<dbReference type="EC" id="2.7.-.-" evidence="1"/>
<dbReference type="EMBL" id="CP000468">
    <property type="protein sequence ID" value="ABJ03314.1"/>
    <property type="molecule type" value="Genomic_DNA"/>
</dbReference>
<dbReference type="RefSeq" id="WP_000187545.1">
    <property type="nucleotide sequence ID" value="NZ_CADILS010000045.1"/>
</dbReference>
<dbReference type="SMR" id="A1AI24"/>
<dbReference type="KEGG" id="ecv:APECO1_2620"/>
<dbReference type="HOGENOM" id="CLU_006533_0_0_6"/>
<dbReference type="UniPathway" id="UPA00232"/>
<dbReference type="Proteomes" id="UP000008216">
    <property type="component" value="Chromosome"/>
</dbReference>
<dbReference type="GO" id="GO:0005886">
    <property type="term" value="C:plasma membrane"/>
    <property type="evidence" value="ECO:0007669"/>
    <property type="project" value="UniProtKB-SubCell"/>
</dbReference>
<dbReference type="GO" id="GO:0005524">
    <property type="term" value="F:ATP binding"/>
    <property type="evidence" value="ECO:0007669"/>
    <property type="project" value="UniProtKB-KW"/>
</dbReference>
<dbReference type="GO" id="GO:0004672">
    <property type="term" value="F:protein kinase activity"/>
    <property type="evidence" value="ECO:0007669"/>
    <property type="project" value="UniProtKB-UniRule"/>
</dbReference>
<dbReference type="GO" id="GO:0010795">
    <property type="term" value="P:regulation of ubiquinone biosynthetic process"/>
    <property type="evidence" value="ECO:0007669"/>
    <property type="project" value="UniProtKB-UniRule"/>
</dbReference>
<dbReference type="GO" id="GO:0006744">
    <property type="term" value="P:ubiquinone biosynthetic process"/>
    <property type="evidence" value="ECO:0007669"/>
    <property type="project" value="UniProtKB-UniPathway"/>
</dbReference>
<dbReference type="CDD" id="cd13972">
    <property type="entry name" value="UbiB"/>
    <property type="match status" value="1"/>
</dbReference>
<dbReference type="HAMAP" id="MF_00414">
    <property type="entry name" value="UbiB"/>
    <property type="match status" value="1"/>
</dbReference>
<dbReference type="InterPro" id="IPR004147">
    <property type="entry name" value="ABC1_dom"/>
</dbReference>
<dbReference type="InterPro" id="IPR011009">
    <property type="entry name" value="Kinase-like_dom_sf"/>
</dbReference>
<dbReference type="InterPro" id="IPR010232">
    <property type="entry name" value="UbiB"/>
</dbReference>
<dbReference type="InterPro" id="IPR045308">
    <property type="entry name" value="UbiB_bact"/>
</dbReference>
<dbReference type="InterPro" id="IPR050154">
    <property type="entry name" value="UbiB_kinase"/>
</dbReference>
<dbReference type="NCBIfam" id="NF003404">
    <property type="entry name" value="PRK04750.1"/>
    <property type="match status" value="1"/>
</dbReference>
<dbReference type="NCBIfam" id="TIGR01982">
    <property type="entry name" value="UbiB"/>
    <property type="match status" value="1"/>
</dbReference>
<dbReference type="PANTHER" id="PTHR10566">
    <property type="entry name" value="CHAPERONE-ACTIVITY OF BC1 COMPLEX CABC1 -RELATED"/>
    <property type="match status" value="1"/>
</dbReference>
<dbReference type="PANTHER" id="PTHR10566:SF113">
    <property type="entry name" value="PROTEIN ACTIVITY OF BC1 COMPLEX KINASE 7, CHLOROPLASTIC"/>
    <property type="match status" value="1"/>
</dbReference>
<dbReference type="Pfam" id="PF03109">
    <property type="entry name" value="ABC1"/>
    <property type="match status" value="1"/>
</dbReference>
<dbReference type="SUPFAM" id="SSF56112">
    <property type="entry name" value="Protein kinase-like (PK-like)"/>
    <property type="match status" value="1"/>
</dbReference>
<comment type="function">
    <text evidence="1">Is probably a protein kinase regulator of UbiI activity which is involved in aerobic coenzyme Q (ubiquinone) biosynthesis.</text>
</comment>
<comment type="pathway">
    <text>Cofactor biosynthesis; ubiquinone biosynthesis [regulation].</text>
</comment>
<comment type="subcellular location">
    <subcellularLocation>
        <location evidence="1">Cell inner membrane</location>
        <topology evidence="1">Multi-pass membrane protein</topology>
    </subcellularLocation>
</comment>
<comment type="similarity">
    <text evidence="1">Belongs to the ABC1 family. UbiB subfamily.</text>
</comment>
<organism>
    <name type="scientific">Escherichia coli O1:K1 / APEC</name>
    <dbReference type="NCBI Taxonomy" id="405955"/>
    <lineage>
        <taxon>Bacteria</taxon>
        <taxon>Pseudomonadati</taxon>
        <taxon>Pseudomonadota</taxon>
        <taxon>Gammaproteobacteria</taxon>
        <taxon>Enterobacterales</taxon>
        <taxon>Enterobacteriaceae</taxon>
        <taxon>Escherichia</taxon>
    </lineage>
</organism>
<proteinExistence type="inferred from homology"/>
<feature type="chain" id="PRO_1000050039" description="Probable protein kinase UbiB">
    <location>
        <begin position="1"/>
        <end position="546"/>
    </location>
</feature>
<feature type="transmembrane region" description="Helical" evidence="1">
    <location>
        <begin position="501"/>
        <end position="521"/>
    </location>
</feature>
<feature type="transmembrane region" description="Helical" evidence="1">
    <location>
        <begin position="522"/>
        <end position="542"/>
    </location>
</feature>
<feature type="domain" description="Protein kinase" evidence="1">
    <location>
        <begin position="124"/>
        <end position="502"/>
    </location>
</feature>
<feature type="active site" description="Proton acceptor" evidence="1">
    <location>
        <position position="288"/>
    </location>
</feature>
<feature type="binding site" evidence="1">
    <location>
        <begin position="130"/>
        <end position="138"/>
    </location>
    <ligand>
        <name>ATP</name>
        <dbReference type="ChEBI" id="CHEBI:30616"/>
    </ligand>
</feature>
<feature type="binding site" evidence="1">
    <location>
        <position position="153"/>
    </location>
    <ligand>
        <name>ATP</name>
        <dbReference type="ChEBI" id="CHEBI:30616"/>
    </ligand>
</feature>
<evidence type="ECO:0000255" key="1">
    <source>
        <dbReference type="HAMAP-Rule" id="MF_00414"/>
    </source>
</evidence>
<accession>A1AI24</accession>
<name>UBIB_ECOK1</name>
<reference key="1">
    <citation type="journal article" date="2007" name="J. Bacteriol.">
        <title>The genome sequence of avian pathogenic Escherichia coli strain O1:K1:H7 shares strong similarities with human extraintestinal pathogenic E. coli genomes.</title>
        <authorList>
            <person name="Johnson T.J."/>
            <person name="Kariyawasam S."/>
            <person name="Wannemuehler Y."/>
            <person name="Mangiamele P."/>
            <person name="Johnson S.J."/>
            <person name="Doetkott C."/>
            <person name="Skyberg J.A."/>
            <person name="Lynne A.M."/>
            <person name="Johnson J.R."/>
            <person name="Nolan L.K."/>
        </authorList>
    </citation>
    <scope>NUCLEOTIDE SEQUENCE [LARGE SCALE GENOMIC DNA]</scope>
</reference>